<proteinExistence type="inferred from homology"/>
<gene>
    <name evidence="1" type="primary">tilS</name>
    <name type="ordered locus">CGSHiGG_05195</name>
</gene>
<protein>
    <recommendedName>
        <fullName evidence="1">tRNA(Ile)-lysidine synthase</fullName>
        <ecNumber evidence="1">6.3.4.19</ecNumber>
    </recommendedName>
    <alternativeName>
        <fullName evidence="1">tRNA(Ile)-2-lysyl-cytidine synthase</fullName>
    </alternativeName>
    <alternativeName>
        <fullName evidence="1">tRNA(Ile)-lysidine synthetase</fullName>
    </alternativeName>
</protein>
<organism>
    <name type="scientific">Haemophilus influenzae (strain PittGG)</name>
    <dbReference type="NCBI Taxonomy" id="374931"/>
    <lineage>
        <taxon>Bacteria</taxon>
        <taxon>Pseudomonadati</taxon>
        <taxon>Pseudomonadota</taxon>
        <taxon>Gammaproteobacteria</taxon>
        <taxon>Pasteurellales</taxon>
        <taxon>Pasteurellaceae</taxon>
        <taxon>Haemophilus</taxon>
    </lineage>
</organism>
<sequence length="430" mass="50143">MDLLSDIEKQLQKATAQAFLIALSGGLDSTVLLSLFAKLCQKQPHLQILSLRAIHIHHGLSPNADSWAKHCQDLCDQFQIPLIIERVQVDKTNGIEAGAREARYQAIKKHLQTQEMLVTAHHLNDQTETFFLALKRGSGLQGLGAMQQQSVLFGMQILRPLLGFTRPQLEDYAQKEKLNWITDESNKDNRFDRNFLRNEILPELRARWAYFDLAVQRSAQHCFEQQQLINDLLSEAFAEHCQIKNQFKLCQFRKYSLAKQTALLRMWLAENQLEMPSKRQLTQLINDVVFAKEEANPQFQLVNKIIRRYQDRLYLTKPFSDLTKYCLKLEQNTLSLPDDLGNLSVQENEHNLIFHWQDFSVTLEKTDLPISIRFGYSGKVKHHPKRPREDIKKIWQELGVPPWERNRIPLIFYGNELKSAVGFFRVFDEY</sequence>
<dbReference type="EC" id="6.3.4.19" evidence="1"/>
<dbReference type="EMBL" id="CP000672">
    <property type="protein sequence ID" value="ABQ99975.1"/>
    <property type="molecule type" value="Genomic_DNA"/>
</dbReference>
<dbReference type="SMR" id="A5UGS0"/>
<dbReference type="KEGG" id="hiq:CGSHiGG_05195"/>
<dbReference type="HOGENOM" id="CLU_018869_2_0_6"/>
<dbReference type="Proteomes" id="UP000001990">
    <property type="component" value="Chromosome"/>
</dbReference>
<dbReference type="GO" id="GO:0005737">
    <property type="term" value="C:cytoplasm"/>
    <property type="evidence" value="ECO:0007669"/>
    <property type="project" value="UniProtKB-SubCell"/>
</dbReference>
<dbReference type="GO" id="GO:0005524">
    <property type="term" value="F:ATP binding"/>
    <property type="evidence" value="ECO:0007669"/>
    <property type="project" value="UniProtKB-UniRule"/>
</dbReference>
<dbReference type="GO" id="GO:0032267">
    <property type="term" value="F:tRNA(Ile)-lysidine synthase activity"/>
    <property type="evidence" value="ECO:0007669"/>
    <property type="project" value="UniProtKB-EC"/>
</dbReference>
<dbReference type="GO" id="GO:0006400">
    <property type="term" value="P:tRNA modification"/>
    <property type="evidence" value="ECO:0007669"/>
    <property type="project" value="UniProtKB-UniRule"/>
</dbReference>
<dbReference type="CDD" id="cd01992">
    <property type="entry name" value="TilS_N"/>
    <property type="match status" value="1"/>
</dbReference>
<dbReference type="Gene3D" id="1.20.59.20">
    <property type="match status" value="1"/>
</dbReference>
<dbReference type="Gene3D" id="3.40.50.620">
    <property type="entry name" value="HUPs"/>
    <property type="match status" value="1"/>
</dbReference>
<dbReference type="HAMAP" id="MF_01161">
    <property type="entry name" value="tRNA_Ile_lys_synt"/>
    <property type="match status" value="1"/>
</dbReference>
<dbReference type="InterPro" id="IPR012796">
    <property type="entry name" value="Lysidine-tRNA-synth_C"/>
</dbReference>
<dbReference type="InterPro" id="IPR014729">
    <property type="entry name" value="Rossmann-like_a/b/a_fold"/>
</dbReference>
<dbReference type="InterPro" id="IPR011063">
    <property type="entry name" value="TilS/TtcA_N"/>
</dbReference>
<dbReference type="InterPro" id="IPR012094">
    <property type="entry name" value="tRNA_Ile_lys_synt"/>
</dbReference>
<dbReference type="InterPro" id="IPR012795">
    <property type="entry name" value="tRNA_Ile_lys_synt_N"/>
</dbReference>
<dbReference type="InterPro" id="IPR015262">
    <property type="entry name" value="tRNA_Ile_lys_synt_subst-bd"/>
</dbReference>
<dbReference type="NCBIfam" id="TIGR02433">
    <property type="entry name" value="lysidine_TilS_C"/>
    <property type="match status" value="1"/>
</dbReference>
<dbReference type="NCBIfam" id="TIGR02432">
    <property type="entry name" value="lysidine_TilS_N"/>
    <property type="match status" value="1"/>
</dbReference>
<dbReference type="PANTHER" id="PTHR43033">
    <property type="entry name" value="TRNA(ILE)-LYSIDINE SYNTHASE-RELATED"/>
    <property type="match status" value="1"/>
</dbReference>
<dbReference type="PANTHER" id="PTHR43033:SF1">
    <property type="entry name" value="TRNA(ILE)-LYSIDINE SYNTHASE-RELATED"/>
    <property type="match status" value="1"/>
</dbReference>
<dbReference type="Pfam" id="PF01171">
    <property type="entry name" value="ATP_bind_3"/>
    <property type="match status" value="1"/>
</dbReference>
<dbReference type="Pfam" id="PF09179">
    <property type="entry name" value="TilS"/>
    <property type="match status" value="1"/>
</dbReference>
<dbReference type="Pfam" id="PF11734">
    <property type="entry name" value="TilS_C"/>
    <property type="match status" value="1"/>
</dbReference>
<dbReference type="SMART" id="SM00977">
    <property type="entry name" value="TilS_C"/>
    <property type="match status" value="1"/>
</dbReference>
<dbReference type="SUPFAM" id="SSF52402">
    <property type="entry name" value="Adenine nucleotide alpha hydrolases-like"/>
    <property type="match status" value="1"/>
</dbReference>
<dbReference type="SUPFAM" id="SSF82829">
    <property type="entry name" value="MesJ substrate recognition domain-like"/>
    <property type="match status" value="1"/>
</dbReference>
<dbReference type="SUPFAM" id="SSF56037">
    <property type="entry name" value="PheT/TilS domain"/>
    <property type="match status" value="1"/>
</dbReference>
<feature type="chain" id="PRO_1000137870" description="tRNA(Ile)-lysidine synthase">
    <location>
        <begin position="1"/>
        <end position="430"/>
    </location>
</feature>
<feature type="binding site" evidence="1">
    <location>
        <begin position="24"/>
        <end position="29"/>
    </location>
    <ligand>
        <name>ATP</name>
        <dbReference type="ChEBI" id="CHEBI:30616"/>
    </ligand>
</feature>
<name>TILS_HAEIG</name>
<reference key="1">
    <citation type="journal article" date="2007" name="Genome Biol.">
        <title>Characterization and modeling of the Haemophilus influenzae core and supragenomes based on the complete genomic sequences of Rd and 12 clinical nontypeable strains.</title>
        <authorList>
            <person name="Hogg J.S."/>
            <person name="Hu F.Z."/>
            <person name="Janto B."/>
            <person name="Boissy R."/>
            <person name="Hayes J."/>
            <person name="Keefe R."/>
            <person name="Post J.C."/>
            <person name="Ehrlich G.D."/>
        </authorList>
    </citation>
    <scope>NUCLEOTIDE SEQUENCE [LARGE SCALE GENOMIC DNA]</scope>
    <source>
        <strain>PittGG</strain>
    </source>
</reference>
<comment type="function">
    <text evidence="1">Ligates lysine onto the cytidine present at position 34 of the AUA codon-specific tRNA(Ile) that contains the anticodon CAU, in an ATP-dependent manner. Cytidine is converted to lysidine, thus changing the amino acid specificity of the tRNA from methionine to isoleucine.</text>
</comment>
<comment type="catalytic activity">
    <reaction evidence="1">
        <text>cytidine(34) in tRNA(Ile2) + L-lysine + ATP = lysidine(34) in tRNA(Ile2) + AMP + diphosphate + H(+)</text>
        <dbReference type="Rhea" id="RHEA:43744"/>
        <dbReference type="Rhea" id="RHEA-COMP:10625"/>
        <dbReference type="Rhea" id="RHEA-COMP:10670"/>
        <dbReference type="ChEBI" id="CHEBI:15378"/>
        <dbReference type="ChEBI" id="CHEBI:30616"/>
        <dbReference type="ChEBI" id="CHEBI:32551"/>
        <dbReference type="ChEBI" id="CHEBI:33019"/>
        <dbReference type="ChEBI" id="CHEBI:82748"/>
        <dbReference type="ChEBI" id="CHEBI:83665"/>
        <dbReference type="ChEBI" id="CHEBI:456215"/>
        <dbReference type="EC" id="6.3.4.19"/>
    </reaction>
</comment>
<comment type="subcellular location">
    <subcellularLocation>
        <location evidence="1">Cytoplasm</location>
    </subcellularLocation>
</comment>
<comment type="domain">
    <text>The N-terminal region contains the highly conserved SGGXDS motif, predicted to be a P-loop motif involved in ATP binding.</text>
</comment>
<comment type="similarity">
    <text evidence="1">Belongs to the tRNA(Ile)-lysidine synthase family.</text>
</comment>
<keyword id="KW-0067">ATP-binding</keyword>
<keyword id="KW-0963">Cytoplasm</keyword>
<keyword id="KW-0436">Ligase</keyword>
<keyword id="KW-0547">Nucleotide-binding</keyword>
<keyword id="KW-0819">tRNA processing</keyword>
<accession>A5UGS0</accession>
<evidence type="ECO:0000255" key="1">
    <source>
        <dbReference type="HAMAP-Rule" id="MF_01161"/>
    </source>
</evidence>